<keyword id="KW-0106">Calcium</keyword>
<keyword id="KW-0903">Direct protein sequencing</keyword>
<keyword id="KW-0325">Glycoprotein</keyword>
<keyword id="KW-0430">Lectin</keyword>
<keyword id="KW-0464">Manganese</keyword>
<keyword id="KW-0479">Metal-binding</keyword>
<keyword id="KW-0732">Signal</keyword>
<proteinExistence type="evidence at protein level"/>
<dbReference type="EMBL" id="U24249">
    <property type="protein sequence ID" value="AAC49271.1"/>
    <property type="molecule type" value="mRNA"/>
</dbReference>
<dbReference type="PIR" id="S62691">
    <property type="entry name" value="S62691"/>
</dbReference>
<dbReference type="SMR" id="Q41161"/>
<dbReference type="GO" id="GO:0030246">
    <property type="term" value="F:carbohydrate binding"/>
    <property type="evidence" value="ECO:0007669"/>
    <property type="project" value="UniProtKB-KW"/>
</dbReference>
<dbReference type="GO" id="GO:0046872">
    <property type="term" value="F:metal ion binding"/>
    <property type="evidence" value="ECO:0007669"/>
    <property type="project" value="UniProtKB-KW"/>
</dbReference>
<dbReference type="CDD" id="cd06899">
    <property type="entry name" value="lectin_legume_LecRK_Arcelin_ConA"/>
    <property type="match status" value="1"/>
</dbReference>
<dbReference type="Gene3D" id="2.60.120.200">
    <property type="match status" value="1"/>
</dbReference>
<dbReference type="InterPro" id="IPR013320">
    <property type="entry name" value="ConA-like_dom_sf"/>
</dbReference>
<dbReference type="InterPro" id="IPR016363">
    <property type="entry name" value="L-lectin"/>
</dbReference>
<dbReference type="InterPro" id="IPR000985">
    <property type="entry name" value="Lectin_LegA_CS"/>
</dbReference>
<dbReference type="InterPro" id="IPR019825">
    <property type="entry name" value="Lectin_legB_Mn/Ca_BS"/>
</dbReference>
<dbReference type="InterPro" id="IPR001220">
    <property type="entry name" value="Legume_lectin_dom"/>
</dbReference>
<dbReference type="InterPro" id="IPR050258">
    <property type="entry name" value="Leguminous_Lectin"/>
</dbReference>
<dbReference type="PANTHER" id="PTHR32401">
    <property type="entry name" value="CONCANAVALIN A-LIKE LECTIN FAMILY PROTEIN"/>
    <property type="match status" value="1"/>
</dbReference>
<dbReference type="PANTHER" id="PTHR32401:SF45">
    <property type="entry name" value="LECTIN"/>
    <property type="match status" value="1"/>
</dbReference>
<dbReference type="Pfam" id="PF00139">
    <property type="entry name" value="Lectin_legB"/>
    <property type="match status" value="1"/>
</dbReference>
<dbReference type="PIRSF" id="PIRSF002690">
    <property type="entry name" value="L-type_lectin_plant"/>
    <property type="match status" value="1"/>
</dbReference>
<dbReference type="SUPFAM" id="SSF49899">
    <property type="entry name" value="Concanavalin A-like lectins/glucanases"/>
    <property type="match status" value="1"/>
</dbReference>
<dbReference type="PROSITE" id="PS00308">
    <property type="entry name" value="LECTIN_LEGUME_ALPHA"/>
    <property type="match status" value="1"/>
</dbReference>
<dbReference type="PROSITE" id="PS00307">
    <property type="entry name" value="LECTIN_LEGUME_BETA"/>
    <property type="match status" value="1"/>
</dbReference>
<reference key="1">
    <citation type="journal article" date="1995" name="Plant Mol. Biol.">
        <title>The seed lectins of black locust (Robinia pseudoacacia) are encoded by two genes which differ from the bark lectin genes.</title>
        <authorList>
            <person name="van Damme E.J.M."/>
            <person name="Barre A."/>
            <person name="Rouge P."/>
            <person name="van Leuven F."/>
            <person name="Peumans W.J."/>
        </authorList>
    </citation>
    <scope>NUCLEOTIDE SEQUENCE [MRNA]</scope>
    <scope>PROTEIN SEQUENCE OF 32-50</scope>
    <source>
        <tissue>Seed</tissue>
    </source>
</reference>
<feature type="signal peptide" evidence="3">
    <location>
        <begin position="1"/>
        <end position="31"/>
    </location>
</feature>
<feature type="chain" id="PRO_0000017643" description="Seed agglutinin 2">
    <location>
        <begin position="32"/>
        <end position="285"/>
    </location>
</feature>
<feature type="binding site" evidence="1">
    <location>
        <position position="156"/>
    </location>
    <ligand>
        <name>Mn(2+)</name>
        <dbReference type="ChEBI" id="CHEBI:29035"/>
    </ligand>
</feature>
<feature type="binding site" evidence="1">
    <location>
        <position position="158"/>
    </location>
    <ligand>
        <name>Ca(2+)</name>
        <dbReference type="ChEBI" id="CHEBI:29108"/>
    </ligand>
</feature>
<feature type="binding site" evidence="1">
    <location>
        <position position="158"/>
    </location>
    <ligand>
        <name>Mn(2+)</name>
        <dbReference type="ChEBI" id="CHEBI:29035"/>
    </ligand>
</feature>
<feature type="binding site" evidence="1">
    <location>
        <position position="162"/>
    </location>
    <ligand>
        <name>Ca(2+)</name>
        <dbReference type="ChEBI" id="CHEBI:29108"/>
    </ligand>
</feature>
<feature type="binding site" evidence="1">
    <location>
        <position position="166"/>
    </location>
    <ligand>
        <name>Ca(2+)</name>
        <dbReference type="ChEBI" id="CHEBI:29108"/>
    </ligand>
</feature>
<feature type="binding site" evidence="1">
    <location>
        <position position="166"/>
    </location>
    <ligand>
        <name>Mn(2+)</name>
        <dbReference type="ChEBI" id="CHEBI:29035"/>
    </ligand>
</feature>
<feature type="binding site" evidence="1">
    <location>
        <position position="171"/>
    </location>
    <ligand>
        <name>Mn(2+)</name>
        <dbReference type="ChEBI" id="CHEBI:29035"/>
    </ligand>
</feature>
<feature type="glycosylation site" description="N-linked (GlcNAc...) asparagine" evidence="2">
    <location>
        <position position="147"/>
    </location>
</feature>
<accession>Q41161</accession>
<name>LCS2_ROBPS</name>
<comment type="function">
    <text>Seed lectin.</text>
</comment>
<comment type="subunit">
    <text>Homotetramer.</text>
</comment>
<comment type="tissue specificity">
    <text>Expressed in seed.</text>
</comment>
<comment type="PTM">
    <text>Mostly found in non-glycosylated form.</text>
</comment>
<comment type="similarity">
    <text evidence="4">Belongs to the leguminous lectin family.</text>
</comment>
<evidence type="ECO:0000250" key="1"/>
<evidence type="ECO:0000255" key="2"/>
<evidence type="ECO:0000269" key="3">
    <source>
    </source>
</evidence>
<evidence type="ECO:0000305" key="4"/>
<sequence length="285" mass="31021">MASYKFKTQNSFLLLLSISFFFLLLLNKVNSTGSLSFSFPKFAPNQPYLIFQRDALVTSTGVLQLTNVVNGVPSRKSLGRALYAAPFQIWDSTTGNVASFVTSFSFIIQAPNPATTADGLAFFLAPVDTQPLDLGGMLGIFKNGYFNKSNQIVAVEFDTFSNRHWDPTGRHMGINVNSIVSVKTVPWNWANGEVANVFISYEASTKSLTASLVYPSLETSFIIHAIVDVKDVLPEWVRFGFSATTGIDTGYVQTNDVLSWSFESNLPGGNSVASVKNAGLSTYAA</sequence>
<protein>
    <recommendedName>
        <fullName>Seed agglutinin 2</fullName>
    </recommendedName>
    <alternativeName>
        <fullName>LECRPAS2</fullName>
    </alternativeName>
    <alternativeName>
        <fullName>RPSAII</fullName>
    </alternativeName>
    <alternativeName>
        <fullName>Seed agglutinin II</fullName>
    </alternativeName>
</protein>
<organism>
    <name type="scientific">Robinia pseudoacacia</name>
    <name type="common">Black locust</name>
    <dbReference type="NCBI Taxonomy" id="35938"/>
    <lineage>
        <taxon>Eukaryota</taxon>
        <taxon>Viridiplantae</taxon>
        <taxon>Streptophyta</taxon>
        <taxon>Embryophyta</taxon>
        <taxon>Tracheophyta</taxon>
        <taxon>Spermatophyta</taxon>
        <taxon>Magnoliopsida</taxon>
        <taxon>eudicotyledons</taxon>
        <taxon>Gunneridae</taxon>
        <taxon>Pentapetalae</taxon>
        <taxon>rosids</taxon>
        <taxon>fabids</taxon>
        <taxon>Fabales</taxon>
        <taxon>Fabaceae</taxon>
        <taxon>Papilionoideae</taxon>
        <taxon>50 kb inversion clade</taxon>
        <taxon>NPAAA clade</taxon>
        <taxon>Hologalegina</taxon>
        <taxon>robinioid clade</taxon>
        <taxon>Robinieae</taxon>
        <taxon>Robinia</taxon>
    </lineage>
</organism>